<comment type="function">
    <text evidence="1">Peptide chain release factor 1 directs the termination of translation in response to the peptide chain termination codons UAG and UAA.</text>
</comment>
<comment type="subcellular location">
    <subcellularLocation>
        <location evidence="1">Cytoplasm</location>
    </subcellularLocation>
</comment>
<comment type="PTM">
    <text evidence="1">Methylated by PrmC. Methylation increases the termination efficiency of RF1 (By similarity).</text>
</comment>
<comment type="similarity">
    <text evidence="2">Belongs to the prokaryotic/mitochondrial release factor family.</text>
</comment>
<reference key="1">
    <citation type="journal article" date="1996" name="Gene">
        <title>Cloning of the Mycoplasma capricolum gene encoding peptide-chain release factor.</title>
        <authorList>
            <person name="Inagaki Y."/>
            <person name="Bessho Y."/>
            <person name="Hori H."/>
            <person name="Osawa S."/>
        </authorList>
    </citation>
    <scope>NUCLEOTIDE SEQUENCE [GENOMIC DNA]</scope>
</reference>
<reference key="2">
    <citation type="submission" date="2005-09" db="EMBL/GenBank/DDBJ databases">
        <authorList>
            <person name="Glass J.I."/>
            <person name="Lartigue C."/>
            <person name="Pfannkoch C."/>
            <person name="Baden-Tillson H."/>
            <person name="Smith H.O."/>
            <person name="Venter J.C."/>
            <person name="Roske K."/>
            <person name="Wise K.S."/>
            <person name="Calcutt M.J."/>
            <person name="Nelson W.C."/>
            <person name="Nierman W.C."/>
        </authorList>
    </citation>
    <scope>NUCLEOTIDE SEQUENCE [LARGE SCALE GENOMIC DNA]</scope>
    <source>
        <strain>California kid / ATCC 27343 / NCTC 10154</strain>
    </source>
</reference>
<dbReference type="EMBL" id="D50100">
    <property type="protein sequence ID" value="BAA08795.1"/>
    <property type="molecule type" value="Genomic_DNA"/>
</dbReference>
<dbReference type="EMBL" id="CP000123">
    <property type="protein sequence ID" value="ABC01154.1"/>
    <property type="molecule type" value="Genomic_DNA"/>
</dbReference>
<dbReference type="RefSeq" id="WP_011387040.1">
    <property type="nucleotide sequence ID" value="NC_007633.1"/>
</dbReference>
<dbReference type="SMR" id="P71496"/>
<dbReference type="GeneID" id="23778903"/>
<dbReference type="KEGG" id="mcp:MCAP_0144"/>
<dbReference type="HOGENOM" id="CLU_036856_0_1_14"/>
<dbReference type="PhylomeDB" id="P71496"/>
<dbReference type="Proteomes" id="UP000001928">
    <property type="component" value="Chromosome"/>
</dbReference>
<dbReference type="GO" id="GO:0005737">
    <property type="term" value="C:cytoplasm"/>
    <property type="evidence" value="ECO:0007669"/>
    <property type="project" value="UniProtKB-SubCell"/>
</dbReference>
<dbReference type="GO" id="GO:0016149">
    <property type="term" value="F:translation release factor activity, codon specific"/>
    <property type="evidence" value="ECO:0007669"/>
    <property type="project" value="UniProtKB-UniRule"/>
</dbReference>
<dbReference type="FunFam" id="3.30.160.20:FF:000004">
    <property type="entry name" value="Peptide chain release factor 1"/>
    <property type="match status" value="1"/>
</dbReference>
<dbReference type="FunFam" id="3.30.70.1660:FF:000002">
    <property type="entry name" value="Peptide chain release factor 1"/>
    <property type="match status" value="1"/>
</dbReference>
<dbReference type="FunFam" id="3.30.70.1660:FF:000004">
    <property type="entry name" value="Peptide chain release factor 1"/>
    <property type="match status" value="1"/>
</dbReference>
<dbReference type="Gene3D" id="3.30.160.20">
    <property type="match status" value="1"/>
</dbReference>
<dbReference type="Gene3D" id="3.30.70.1660">
    <property type="match status" value="1"/>
</dbReference>
<dbReference type="Gene3D" id="6.10.140.1950">
    <property type="match status" value="1"/>
</dbReference>
<dbReference type="HAMAP" id="MF_00093">
    <property type="entry name" value="Rel_fac_1"/>
    <property type="match status" value="1"/>
</dbReference>
<dbReference type="InterPro" id="IPR005139">
    <property type="entry name" value="PCRF"/>
</dbReference>
<dbReference type="InterPro" id="IPR000352">
    <property type="entry name" value="Pep_chain_release_fac_I"/>
</dbReference>
<dbReference type="InterPro" id="IPR045853">
    <property type="entry name" value="Pep_chain_release_fac_I_sf"/>
</dbReference>
<dbReference type="InterPro" id="IPR050057">
    <property type="entry name" value="Prokaryotic/Mito_RF"/>
</dbReference>
<dbReference type="InterPro" id="IPR004373">
    <property type="entry name" value="RF-1"/>
</dbReference>
<dbReference type="NCBIfam" id="TIGR00019">
    <property type="entry name" value="prfA"/>
    <property type="match status" value="1"/>
</dbReference>
<dbReference type="NCBIfam" id="NF001859">
    <property type="entry name" value="PRK00591.1"/>
    <property type="match status" value="1"/>
</dbReference>
<dbReference type="PANTHER" id="PTHR43804">
    <property type="entry name" value="LD18447P"/>
    <property type="match status" value="1"/>
</dbReference>
<dbReference type="PANTHER" id="PTHR43804:SF7">
    <property type="entry name" value="LD18447P"/>
    <property type="match status" value="1"/>
</dbReference>
<dbReference type="Pfam" id="PF03462">
    <property type="entry name" value="PCRF"/>
    <property type="match status" value="1"/>
</dbReference>
<dbReference type="Pfam" id="PF00472">
    <property type="entry name" value="RF-1"/>
    <property type="match status" value="1"/>
</dbReference>
<dbReference type="SMART" id="SM00937">
    <property type="entry name" value="PCRF"/>
    <property type="match status" value="1"/>
</dbReference>
<dbReference type="SUPFAM" id="SSF75620">
    <property type="entry name" value="Release factor"/>
    <property type="match status" value="1"/>
</dbReference>
<dbReference type="PROSITE" id="PS00745">
    <property type="entry name" value="RF_PROK_I"/>
    <property type="match status" value="1"/>
</dbReference>
<keyword id="KW-0963">Cytoplasm</keyword>
<keyword id="KW-0488">Methylation</keyword>
<keyword id="KW-0648">Protein biosynthesis</keyword>
<accession>P71496</accession>
<accession>Q2SSX8</accession>
<proteinExistence type="inferred from homology"/>
<evidence type="ECO:0000250" key="1"/>
<evidence type="ECO:0000305" key="2"/>
<protein>
    <recommendedName>
        <fullName>Peptide chain release factor 1</fullName>
        <shortName>RF-1</shortName>
    </recommendedName>
</protein>
<name>RF1_MYCCT</name>
<feature type="chain" id="PRO_0000177700" description="Peptide chain release factor 1">
    <location>
        <begin position="1"/>
        <end position="363"/>
    </location>
</feature>
<feature type="modified residue" description="N5-methylglutamine" evidence="1">
    <location>
        <position position="237"/>
    </location>
</feature>
<feature type="sequence conflict" description="In Ref. 1; BAA08795." evidence="2" ref="1">
    <original>I</original>
    <variation>F</variation>
    <location>
        <position position="309"/>
    </location>
</feature>
<feature type="sequence conflict" description="In Ref. 1." evidence="2" ref="1">
    <original>VAEQLKNNE</original>
    <variation>SSWTIKKQWIKLFLIF</variation>
    <location>
        <begin position="355"/>
        <end position="363"/>
    </location>
</feature>
<organism>
    <name type="scientific">Mycoplasma capricolum subsp. capricolum (strain California kid / ATCC 27343 / NCTC 10154)</name>
    <dbReference type="NCBI Taxonomy" id="340047"/>
    <lineage>
        <taxon>Bacteria</taxon>
        <taxon>Bacillati</taxon>
        <taxon>Mycoplasmatota</taxon>
        <taxon>Mollicutes</taxon>
        <taxon>Mycoplasmataceae</taxon>
        <taxon>Mycoplasma</taxon>
    </lineage>
</organism>
<sequence length="363" mass="41157">MNAKTYEALETMQKRLFQIQKDLEDENILKDIKKFTELNKEKANLEEVVEKFVEYKKAVDHIKDAKAILENEKDSELIELAKIELDENNDKVEHLQQVIEEMLLPKDPNDEKNVIIEIRGAAGGDEANIFAGDLLRMYKLYAETQNWKINILEASLGEAGGYSQVVFMIKGDRVYSKLKFESGAHRVQRVPKTEAKGRIQTSTATVAVLPEMSEVEIEIRSNDLRIDTYRASGAGGQHVNTTDSAVRITHLPTGIVVTSQDGRSQHDNKDIAMTMLRAKVYEAEVEKQQAQADATRKNAVGTGARSEKIRTYNYPQNRVTDHRVGLTLNKLDQVMEGNIDEFIIALINEEQRQKVAEQLKNNE</sequence>
<gene>
    <name type="primary">prfA</name>
    <name type="ordered locus">MCAP_0144</name>
</gene>